<evidence type="ECO:0000255" key="1">
    <source>
        <dbReference type="HAMAP-Rule" id="MF_00291"/>
    </source>
</evidence>
<evidence type="ECO:0000305" key="2"/>
<sequence>MAEEAQYEYLVPLEKYLSAGVRLGTRLSNKYLEERGFIYAVRPDGLRIFDIKKIDERLRIAAKLIARYPPDRVLVHTTRPYGFKPVQMFCKFVGCKALTGRFIPGMLTNPNLSNYLEVDLLFVVDPRLDSQAVAEAAKMGIPVVALVDTDTPHQYIDFMIPCNNKGRKSLALIFWVLARQVLRERGELKPDQDLPVPPEEFETRLVQT</sequence>
<dbReference type="EMBL" id="CP000561">
    <property type="protein sequence ID" value="ABO07467.1"/>
    <property type="molecule type" value="Genomic_DNA"/>
</dbReference>
<dbReference type="RefSeq" id="WP_011848724.1">
    <property type="nucleotide sequence ID" value="NC_009073.1"/>
</dbReference>
<dbReference type="PDB" id="9E71">
    <property type="method" value="EM"/>
    <property type="resolution" value="2.36 A"/>
    <property type="chains" value="BB=1-208"/>
</dbReference>
<dbReference type="PDB" id="9E7F">
    <property type="method" value="EM"/>
    <property type="resolution" value="2.53 A"/>
    <property type="chains" value="BB=1-208"/>
</dbReference>
<dbReference type="PDBsum" id="9E71"/>
<dbReference type="PDBsum" id="9E7F"/>
<dbReference type="EMDB" id="EMD-47628"/>
<dbReference type="EMDB" id="EMD-47668"/>
<dbReference type="SMR" id="A3MS50"/>
<dbReference type="STRING" id="410359.Pcal_0027"/>
<dbReference type="GeneID" id="4909505"/>
<dbReference type="KEGG" id="pcl:Pcal_0027"/>
<dbReference type="eggNOG" id="arCOG04245">
    <property type="taxonomic scope" value="Archaea"/>
</dbReference>
<dbReference type="HOGENOM" id="CLU_058171_3_0_2"/>
<dbReference type="OrthoDB" id="371797at2157"/>
<dbReference type="Proteomes" id="UP000001431">
    <property type="component" value="Chromosome"/>
</dbReference>
<dbReference type="GO" id="GO:0015935">
    <property type="term" value="C:small ribosomal subunit"/>
    <property type="evidence" value="ECO:0007669"/>
    <property type="project" value="InterPro"/>
</dbReference>
<dbReference type="GO" id="GO:0003735">
    <property type="term" value="F:structural constituent of ribosome"/>
    <property type="evidence" value="ECO:0007669"/>
    <property type="project" value="InterPro"/>
</dbReference>
<dbReference type="GO" id="GO:0006412">
    <property type="term" value="P:translation"/>
    <property type="evidence" value="ECO:0007669"/>
    <property type="project" value="UniProtKB-UniRule"/>
</dbReference>
<dbReference type="CDD" id="cd01425">
    <property type="entry name" value="RPS2"/>
    <property type="match status" value="1"/>
</dbReference>
<dbReference type="FunFam" id="3.40.50.10490:FF:000030">
    <property type="entry name" value="30S ribosomal protein S2"/>
    <property type="match status" value="1"/>
</dbReference>
<dbReference type="Gene3D" id="3.40.50.10490">
    <property type="entry name" value="Glucose-6-phosphate isomerase like protein, domain 1"/>
    <property type="match status" value="1"/>
</dbReference>
<dbReference type="HAMAP" id="MF_00291_A">
    <property type="entry name" value="Ribosomal_uS2_A"/>
    <property type="match status" value="1"/>
</dbReference>
<dbReference type="InterPro" id="IPR001865">
    <property type="entry name" value="Ribosomal_uS2"/>
</dbReference>
<dbReference type="InterPro" id="IPR023454">
    <property type="entry name" value="Ribosomal_uS2_arc"/>
</dbReference>
<dbReference type="InterPro" id="IPR005707">
    <property type="entry name" value="Ribosomal_uS2_euk/arc"/>
</dbReference>
<dbReference type="InterPro" id="IPR023591">
    <property type="entry name" value="Ribosomal_uS2_flav_dom_sf"/>
</dbReference>
<dbReference type="NCBIfam" id="TIGR01012">
    <property type="entry name" value="uS2_euk_arch"/>
    <property type="match status" value="1"/>
</dbReference>
<dbReference type="PANTHER" id="PTHR11489">
    <property type="entry name" value="40S RIBOSOMAL PROTEIN SA"/>
    <property type="match status" value="1"/>
</dbReference>
<dbReference type="Pfam" id="PF00318">
    <property type="entry name" value="Ribosomal_S2"/>
    <property type="match status" value="1"/>
</dbReference>
<dbReference type="PRINTS" id="PR00395">
    <property type="entry name" value="RIBOSOMALS2"/>
</dbReference>
<dbReference type="SUPFAM" id="SSF52313">
    <property type="entry name" value="Ribosomal protein S2"/>
    <property type="match status" value="1"/>
</dbReference>
<accession>A3MS50</accession>
<name>RS2_PYRCJ</name>
<gene>
    <name evidence="1" type="primary">rps2</name>
    <name type="ordered locus">Pcal_0027</name>
</gene>
<reference key="1">
    <citation type="submission" date="2007-02" db="EMBL/GenBank/DDBJ databases">
        <title>Complete sequence of Pyrobaculum calidifontis JCM 11548.</title>
        <authorList>
            <consortium name="US DOE Joint Genome Institute"/>
            <person name="Copeland A."/>
            <person name="Lucas S."/>
            <person name="Lapidus A."/>
            <person name="Barry K."/>
            <person name="Glavina del Rio T."/>
            <person name="Dalin E."/>
            <person name="Tice H."/>
            <person name="Pitluck S."/>
            <person name="Chain P."/>
            <person name="Malfatti S."/>
            <person name="Shin M."/>
            <person name="Vergez L."/>
            <person name="Schmutz J."/>
            <person name="Larimer F."/>
            <person name="Land M."/>
            <person name="Hauser L."/>
            <person name="Kyrpides N."/>
            <person name="Mikhailova N."/>
            <person name="Cozen A.E."/>
            <person name="Fitz-Gibbon S.T."/>
            <person name="House C.H."/>
            <person name="Saltikov C."/>
            <person name="Lowe T.M."/>
            <person name="Richardson P."/>
        </authorList>
    </citation>
    <scope>NUCLEOTIDE SEQUENCE [LARGE SCALE GENOMIC DNA]</scope>
    <source>
        <strain>DSM 21063 / JCM 11548 / VA1</strain>
    </source>
</reference>
<proteinExistence type="evidence at protein level"/>
<feature type="chain" id="PRO_0000352078" description="Small ribosomal subunit protein uS2">
    <location>
        <begin position="1"/>
        <end position="208"/>
    </location>
</feature>
<organism>
    <name type="scientific">Pyrobaculum calidifontis (strain DSM 21063 / JCM 11548 / VA1)</name>
    <dbReference type="NCBI Taxonomy" id="410359"/>
    <lineage>
        <taxon>Archaea</taxon>
        <taxon>Thermoproteota</taxon>
        <taxon>Thermoprotei</taxon>
        <taxon>Thermoproteales</taxon>
        <taxon>Thermoproteaceae</taxon>
        <taxon>Pyrobaculum</taxon>
    </lineage>
</organism>
<keyword id="KW-0002">3D-structure</keyword>
<keyword id="KW-0687">Ribonucleoprotein</keyword>
<keyword id="KW-0689">Ribosomal protein</keyword>
<comment type="similarity">
    <text evidence="1">Belongs to the universal ribosomal protein uS2 family.</text>
</comment>
<protein>
    <recommendedName>
        <fullName evidence="1">Small ribosomal subunit protein uS2</fullName>
    </recommendedName>
    <alternativeName>
        <fullName evidence="2">30S ribosomal protein S2</fullName>
    </alternativeName>
</protein>